<keyword id="KW-0066">ATP synthesis</keyword>
<keyword id="KW-1003">Cell membrane</keyword>
<keyword id="KW-0138">CF(0)</keyword>
<keyword id="KW-0375">Hydrogen ion transport</keyword>
<keyword id="KW-0406">Ion transport</keyword>
<keyword id="KW-0472">Membrane</keyword>
<keyword id="KW-1185">Reference proteome</keyword>
<keyword id="KW-0812">Transmembrane</keyword>
<keyword id="KW-1133">Transmembrane helix</keyword>
<keyword id="KW-0813">Transport</keyword>
<accession>Q6KI77</accession>
<feature type="chain" id="PRO_0000368612" description="ATP synthase subunit b">
    <location>
        <begin position="1"/>
        <end position="184"/>
    </location>
</feature>
<feature type="transmembrane region" description="Helical" evidence="1">
    <location>
        <begin position="25"/>
        <end position="45"/>
    </location>
</feature>
<comment type="function">
    <text evidence="1">F(1)F(0) ATP synthase produces ATP from ADP in the presence of a proton or sodium gradient. F-type ATPases consist of two structural domains, F(1) containing the extramembraneous catalytic core and F(0) containing the membrane proton channel, linked together by a central stalk and a peripheral stalk. During catalysis, ATP synthesis in the catalytic domain of F(1) is coupled via a rotary mechanism of the central stalk subunits to proton translocation.</text>
</comment>
<comment type="function">
    <text evidence="1">Component of the F(0) channel, it forms part of the peripheral stalk, linking F(1) to F(0).</text>
</comment>
<comment type="subunit">
    <text evidence="1">F-type ATPases have 2 components, F(1) - the catalytic core - and F(0) - the membrane proton channel. F(1) has five subunits: alpha(3), beta(3), gamma(1), delta(1), epsilon(1). F(0) has three main subunits: a(1), b(2) and c(10-14). The alpha and beta chains form an alternating ring which encloses part of the gamma chain. F(1) is attached to F(0) by a central stalk formed by the gamma and epsilon chains, while a peripheral stalk is formed by the delta and b chains.</text>
</comment>
<comment type="subcellular location">
    <subcellularLocation>
        <location evidence="1">Cell membrane</location>
        <topology evidence="1">Single-pass membrane protein</topology>
    </subcellularLocation>
</comment>
<comment type="similarity">
    <text evidence="1">Belongs to the ATPase B chain family.</text>
</comment>
<dbReference type="EMBL" id="AE017308">
    <property type="protein sequence ID" value="AAT27699.1"/>
    <property type="molecule type" value="Genomic_DNA"/>
</dbReference>
<dbReference type="RefSeq" id="WP_011264733.1">
    <property type="nucleotide sequence ID" value="NC_006908.1"/>
</dbReference>
<dbReference type="SMR" id="Q6KI77"/>
<dbReference type="STRING" id="267748.MMOB2130"/>
<dbReference type="KEGG" id="mmo:MMOB2130"/>
<dbReference type="eggNOG" id="COG0711">
    <property type="taxonomic scope" value="Bacteria"/>
</dbReference>
<dbReference type="HOGENOM" id="CLU_079215_4_3_14"/>
<dbReference type="OrthoDB" id="400556at2"/>
<dbReference type="Proteomes" id="UP000009072">
    <property type="component" value="Chromosome"/>
</dbReference>
<dbReference type="GO" id="GO:0005886">
    <property type="term" value="C:plasma membrane"/>
    <property type="evidence" value="ECO:0007669"/>
    <property type="project" value="UniProtKB-SubCell"/>
</dbReference>
<dbReference type="GO" id="GO:0045259">
    <property type="term" value="C:proton-transporting ATP synthase complex"/>
    <property type="evidence" value="ECO:0007669"/>
    <property type="project" value="UniProtKB-KW"/>
</dbReference>
<dbReference type="GO" id="GO:0046933">
    <property type="term" value="F:proton-transporting ATP synthase activity, rotational mechanism"/>
    <property type="evidence" value="ECO:0007669"/>
    <property type="project" value="UniProtKB-UniRule"/>
</dbReference>
<dbReference type="GO" id="GO:0046961">
    <property type="term" value="F:proton-transporting ATPase activity, rotational mechanism"/>
    <property type="evidence" value="ECO:0007669"/>
    <property type="project" value="TreeGrafter"/>
</dbReference>
<dbReference type="CDD" id="cd06503">
    <property type="entry name" value="ATP-synt_Fo_b"/>
    <property type="match status" value="1"/>
</dbReference>
<dbReference type="HAMAP" id="MF_01398">
    <property type="entry name" value="ATP_synth_b_bprime"/>
    <property type="match status" value="1"/>
</dbReference>
<dbReference type="InterPro" id="IPR002146">
    <property type="entry name" value="ATP_synth_b/b'su_bac/chlpt"/>
</dbReference>
<dbReference type="InterPro" id="IPR050059">
    <property type="entry name" value="ATP_synthase_B_chain"/>
</dbReference>
<dbReference type="PANTHER" id="PTHR33445:SF1">
    <property type="entry name" value="ATP SYNTHASE SUBUNIT B"/>
    <property type="match status" value="1"/>
</dbReference>
<dbReference type="PANTHER" id="PTHR33445">
    <property type="entry name" value="ATP SYNTHASE SUBUNIT B', CHLOROPLASTIC"/>
    <property type="match status" value="1"/>
</dbReference>
<dbReference type="Pfam" id="PF00430">
    <property type="entry name" value="ATP-synt_B"/>
    <property type="match status" value="1"/>
</dbReference>
<reference key="1">
    <citation type="journal article" date="2004" name="Genome Res.">
        <title>The complete genome and proteome of Mycoplasma mobile.</title>
        <authorList>
            <person name="Jaffe J.D."/>
            <person name="Stange-Thomann N."/>
            <person name="Smith C."/>
            <person name="DeCaprio D."/>
            <person name="Fisher S."/>
            <person name="Butler J."/>
            <person name="Calvo S."/>
            <person name="Elkins T."/>
            <person name="FitzGerald M.G."/>
            <person name="Hafez N."/>
            <person name="Kodira C.D."/>
            <person name="Major J."/>
            <person name="Wang S."/>
            <person name="Wilkinson J."/>
            <person name="Nicol R."/>
            <person name="Nusbaum C."/>
            <person name="Birren B."/>
            <person name="Berg H.C."/>
            <person name="Church G.M."/>
        </authorList>
    </citation>
    <scope>NUCLEOTIDE SEQUENCE [LARGE SCALE GENOMIC DNA]</scope>
    <source>
        <strain>ATCC 43663 / NCTC 11711 / 163 K</strain>
    </source>
</reference>
<gene>
    <name evidence="1" type="primary">atpF</name>
    <name type="ordered locus">MMOB2130</name>
</gene>
<sequence length="184" mass="21091">MLELGIFSSNTQNIGQSISERFAGIFPSWPIMLATLVSFTILLVVLTKLIYKPVKKMMKNRRDFIQNNIDESTKQVEKSNELLEKSNIEILDAKIKANTIIKDAQILAEEIKNNSIKDAKDKSKQLLEETKIYIRQQKVLFAKESKKEIVEIAGEMTKKILSESDVKLEDSKFLENLLKNDITK</sequence>
<proteinExistence type="inferred from homology"/>
<name>ATPF_MYCM1</name>
<organism>
    <name type="scientific">Mycoplasma mobile (strain ATCC 43663 / 163K / NCTC 11711)</name>
    <name type="common">Mesomycoplasma mobile</name>
    <dbReference type="NCBI Taxonomy" id="267748"/>
    <lineage>
        <taxon>Bacteria</taxon>
        <taxon>Bacillati</taxon>
        <taxon>Mycoplasmatota</taxon>
        <taxon>Mycoplasmoidales</taxon>
        <taxon>Metamycoplasmataceae</taxon>
        <taxon>Mesomycoplasma</taxon>
    </lineage>
</organism>
<evidence type="ECO:0000255" key="1">
    <source>
        <dbReference type="HAMAP-Rule" id="MF_01398"/>
    </source>
</evidence>
<protein>
    <recommendedName>
        <fullName evidence="1">ATP synthase subunit b</fullName>
    </recommendedName>
    <alternativeName>
        <fullName evidence="1">ATP synthase F(0) sector subunit b</fullName>
    </alternativeName>
    <alternativeName>
        <fullName evidence="1">ATPase subunit I</fullName>
    </alternativeName>
    <alternativeName>
        <fullName evidence="1">F-type ATPase subunit b</fullName>
        <shortName evidence="1">F-ATPase subunit b</shortName>
    </alternativeName>
</protein>